<sequence length="73" mass="8191">MKANIHPNYHKITVVMTDGTQYTTRSTWGKEGDTLNLDIDPRTHPAWTGGSQTLVDRGGRLSKFKNRFGNIGM</sequence>
<accession>A9IYQ7</accession>
<evidence type="ECO:0000255" key="1">
    <source>
        <dbReference type="HAMAP-Rule" id="MF_00501"/>
    </source>
</evidence>
<evidence type="ECO:0000305" key="2"/>
<organism>
    <name type="scientific">Bartonella tribocorum (strain CIP 105476 / IBS 506)</name>
    <dbReference type="NCBI Taxonomy" id="382640"/>
    <lineage>
        <taxon>Bacteria</taxon>
        <taxon>Pseudomonadati</taxon>
        <taxon>Pseudomonadota</taxon>
        <taxon>Alphaproteobacteria</taxon>
        <taxon>Hyphomicrobiales</taxon>
        <taxon>Bartonellaceae</taxon>
        <taxon>Bartonella</taxon>
    </lineage>
</organism>
<proteinExistence type="inferred from homology"/>
<feature type="chain" id="PRO_1000176947" description="Large ribosomal subunit protein bL31">
    <location>
        <begin position="1"/>
        <end position="73"/>
    </location>
</feature>
<keyword id="KW-0687">Ribonucleoprotein</keyword>
<keyword id="KW-0689">Ribosomal protein</keyword>
<keyword id="KW-0694">RNA-binding</keyword>
<keyword id="KW-0699">rRNA-binding</keyword>
<protein>
    <recommendedName>
        <fullName evidence="1">Large ribosomal subunit protein bL31</fullName>
    </recommendedName>
    <alternativeName>
        <fullName evidence="2">50S ribosomal protein L31</fullName>
    </alternativeName>
</protein>
<comment type="function">
    <text evidence="1">Binds the 23S rRNA.</text>
</comment>
<comment type="subunit">
    <text evidence="1">Part of the 50S ribosomal subunit.</text>
</comment>
<comment type="similarity">
    <text evidence="1">Belongs to the bacterial ribosomal protein bL31 family. Type A subfamily.</text>
</comment>
<gene>
    <name evidence="1" type="primary">rpmE</name>
    <name type="ordered locus">BT_2412</name>
</gene>
<dbReference type="EMBL" id="AM260525">
    <property type="protein sequence ID" value="CAK02406.1"/>
    <property type="molecule type" value="Genomic_DNA"/>
</dbReference>
<dbReference type="RefSeq" id="WP_005774581.1">
    <property type="nucleotide sequence ID" value="NC_010161.1"/>
</dbReference>
<dbReference type="SMR" id="A9IYQ7"/>
<dbReference type="GeneID" id="71062012"/>
<dbReference type="KEGG" id="btr:BT_2412"/>
<dbReference type="eggNOG" id="COG0254">
    <property type="taxonomic scope" value="Bacteria"/>
</dbReference>
<dbReference type="HOGENOM" id="CLU_114306_3_2_5"/>
<dbReference type="Proteomes" id="UP000001592">
    <property type="component" value="Chromosome"/>
</dbReference>
<dbReference type="GO" id="GO:1990904">
    <property type="term" value="C:ribonucleoprotein complex"/>
    <property type="evidence" value="ECO:0007669"/>
    <property type="project" value="UniProtKB-KW"/>
</dbReference>
<dbReference type="GO" id="GO:0005840">
    <property type="term" value="C:ribosome"/>
    <property type="evidence" value="ECO:0007669"/>
    <property type="project" value="UniProtKB-KW"/>
</dbReference>
<dbReference type="GO" id="GO:0019843">
    <property type="term" value="F:rRNA binding"/>
    <property type="evidence" value="ECO:0007669"/>
    <property type="project" value="UniProtKB-KW"/>
</dbReference>
<dbReference type="GO" id="GO:0003735">
    <property type="term" value="F:structural constituent of ribosome"/>
    <property type="evidence" value="ECO:0007669"/>
    <property type="project" value="InterPro"/>
</dbReference>
<dbReference type="GO" id="GO:0006412">
    <property type="term" value="P:translation"/>
    <property type="evidence" value="ECO:0007669"/>
    <property type="project" value="UniProtKB-UniRule"/>
</dbReference>
<dbReference type="Gene3D" id="4.10.830.30">
    <property type="entry name" value="Ribosomal protein L31"/>
    <property type="match status" value="1"/>
</dbReference>
<dbReference type="HAMAP" id="MF_00501">
    <property type="entry name" value="Ribosomal_bL31_1"/>
    <property type="match status" value="1"/>
</dbReference>
<dbReference type="InterPro" id="IPR034704">
    <property type="entry name" value="Ribosomal_bL28/bL31-like_sf"/>
</dbReference>
<dbReference type="InterPro" id="IPR002150">
    <property type="entry name" value="Ribosomal_bL31"/>
</dbReference>
<dbReference type="InterPro" id="IPR027491">
    <property type="entry name" value="Ribosomal_bL31_A"/>
</dbReference>
<dbReference type="InterPro" id="IPR042105">
    <property type="entry name" value="Ribosomal_bL31_sf"/>
</dbReference>
<dbReference type="NCBIfam" id="TIGR00105">
    <property type="entry name" value="L31"/>
    <property type="match status" value="1"/>
</dbReference>
<dbReference type="NCBIfam" id="NF001809">
    <property type="entry name" value="PRK00528.1"/>
    <property type="match status" value="1"/>
</dbReference>
<dbReference type="PANTHER" id="PTHR33280">
    <property type="entry name" value="50S RIBOSOMAL PROTEIN L31, CHLOROPLASTIC"/>
    <property type="match status" value="1"/>
</dbReference>
<dbReference type="PANTHER" id="PTHR33280:SF6">
    <property type="entry name" value="LARGE RIBOSOMAL SUBUNIT PROTEIN BL31A"/>
    <property type="match status" value="1"/>
</dbReference>
<dbReference type="Pfam" id="PF01197">
    <property type="entry name" value="Ribosomal_L31"/>
    <property type="match status" value="1"/>
</dbReference>
<dbReference type="PRINTS" id="PR01249">
    <property type="entry name" value="RIBOSOMALL31"/>
</dbReference>
<dbReference type="SUPFAM" id="SSF143800">
    <property type="entry name" value="L28p-like"/>
    <property type="match status" value="1"/>
</dbReference>
<dbReference type="PROSITE" id="PS01143">
    <property type="entry name" value="RIBOSOMAL_L31"/>
    <property type="match status" value="1"/>
</dbReference>
<name>RL31_BART1</name>
<reference key="1">
    <citation type="journal article" date="2007" name="Nat. Genet.">
        <title>Genomic analysis of Bartonella identifies type IV secretion systems as host adaptability factors.</title>
        <authorList>
            <person name="Saenz H.L."/>
            <person name="Engel P."/>
            <person name="Stoeckli M.C."/>
            <person name="Lanz C."/>
            <person name="Raddatz G."/>
            <person name="Vayssier-Taussat M."/>
            <person name="Birtles R."/>
            <person name="Schuster S.C."/>
            <person name="Dehio C."/>
        </authorList>
    </citation>
    <scope>NUCLEOTIDE SEQUENCE [LARGE SCALE GENOMIC DNA]</scope>
    <source>
        <strain>CIP 105476 / IBS 506</strain>
    </source>
</reference>